<feature type="signal peptide" evidence="3">
    <location>
        <begin position="1"/>
        <end position="24"/>
    </location>
</feature>
<feature type="chain" id="PRO_0000262967" description="Gamma conglutin 1">
    <location>
        <begin position="25"/>
        <end position="431"/>
    </location>
</feature>
<feature type="chain" id="PRO_0000451770" description="Gamma conglutin 1 alpha subunit" evidence="2">
    <location>
        <begin position="25"/>
        <end position="275"/>
    </location>
</feature>
<feature type="chain" id="PRO_0000451771" description="Gamma conglutin 1 beta subunit" evidence="2">
    <location>
        <begin position="276"/>
        <end position="431"/>
    </location>
</feature>
<feature type="domain" description="Peptidase A1" evidence="4">
    <location>
        <begin position="51"/>
        <end position="407"/>
    </location>
</feature>
<feature type="site" description="Cleavage; alternate" evidence="2">
    <location>
        <begin position="271"/>
        <end position="272"/>
    </location>
</feature>
<feature type="site" description="Cleavage; alternate" evidence="2">
    <location>
        <begin position="273"/>
        <end position="274"/>
    </location>
</feature>
<feature type="site" description="Cleavage; partial" evidence="2">
    <location>
        <begin position="275"/>
        <end position="276"/>
    </location>
</feature>
<feature type="disulfide bond" evidence="1">
    <location>
        <begin position="79"/>
        <end position="168"/>
    </location>
</feature>
<feature type="disulfide bond" evidence="1">
    <location>
        <begin position="93"/>
        <end position="106"/>
    </location>
</feature>
<feature type="disulfide bond" evidence="1">
    <location>
        <begin position="98"/>
        <end position="123"/>
    </location>
</feature>
<feature type="disulfide bond" evidence="1">
    <location>
        <begin position="109"/>
        <end position="118"/>
    </location>
</feature>
<feature type="disulfide bond" description="Interchain (between alpha and beta chains, with C-417 in beta chain)" evidence="1">
    <location>
        <position position="212"/>
    </location>
</feature>
<feature type="disulfide bond" evidence="1">
    <location>
        <begin position="322"/>
        <end position="369"/>
    </location>
</feature>
<feature type="disulfide bond" description="Interchain (between alpha and beta chains, with C-212 in alpha chain)" evidence="1">
    <location>
        <position position="417"/>
    </location>
</feature>
<dbReference type="EMBL" id="CABIKO010000006">
    <property type="protein sequence ID" value="VVA12735.1"/>
    <property type="molecule type" value="Genomic_DNA"/>
</dbReference>
<dbReference type="SMR" id="P82952"/>
<dbReference type="Allergome" id="911">
    <property type="allergen name" value="Pru du AP"/>
</dbReference>
<dbReference type="EnsemblPlants" id="VVA12735">
    <property type="protein sequence ID" value="VVA12735"/>
    <property type="gene ID" value="Prudul26B001639"/>
</dbReference>
<dbReference type="Gramene" id="VVA12735">
    <property type="protein sequence ID" value="VVA12735"/>
    <property type="gene ID" value="Prudul26B001639"/>
</dbReference>
<dbReference type="InParanoid" id="P82952"/>
<dbReference type="OMA" id="PYQLASH"/>
<dbReference type="Proteomes" id="UP000327085">
    <property type="component" value="Chromosome 6"/>
</dbReference>
<dbReference type="GO" id="GO:0005576">
    <property type="term" value="C:extracellular region"/>
    <property type="evidence" value="ECO:0007669"/>
    <property type="project" value="UniProtKB-SubCell"/>
</dbReference>
<dbReference type="GO" id="GO:0004190">
    <property type="term" value="F:aspartic-type endopeptidase activity"/>
    <property type="evidence" value="ECO:0007669"/>
    <property type="project" value="InterPro"/>
</dbReference>
<dbReference type="GO" id="GO:0019863">
    <property type="term" value="F:IgE binding"/>
    <property type="evidence" value="ECO:0007669"/>
    <property type="project" value="UniProtKB-KW"/>
</dbReference>
<dbReference type="GO" id="GO:0006508">
    <property type="term" value="P:proteolysis"/>
    <property type="evidence" value="ECO:0007669"/>
    <property type="project" value="InterPro"/>
</dbReference>
<dbReference type="CDD" id="cd05489">
    <property type="entry name" value="xylanase_inhibitor_I_like"/>
    <property type="match status" value="1"/>
</dbReference>
<dbReference type="FunFam" id="2.40.70.10:FF:000041">
    <property type="entry name" value="Basic 7S globulin"/>
    <property type="match status" value="1"/>
</dbReference>
<dbReference type="FunFam" id="2.40.70.10:FF:000045">
    <property type="entry name" value="Basic 7S globulin"/>
    <property type="match status" value="1"/>
</dbReference>
<dbReference type="Gene3D" id="2.40.70.10">
    <property type="entry name" value="Acid Proteases"/>
    <property type="match status" value="2"/>
</dbReference>
<dbReference type="InterPro" id="IPR001461">
    <property type="entry name" value="Aspartic_peptidase_A1"/>
</dbReference>
<dbReference type="InterPro" id="IPR033121">
    <property type="entry name" value="PEPTIDASE_A1"/>
</dbReference>
<dbReference type="InterPro" id="IPR021109">
    <property type="entry name" value="Peptidase_aspartic_dom_sf"/>
</dbReference>
<dbReference type="InterPro" id="IPR032799">
    <property type="entry name" value="TAXi_C"/>
</dbReference>
<dbReference type="InterPro" id="IPR032861">
    <property type="entry name" value="TAXi_N"/>
</dbReference>
<dbReference type="InterPro" id="IPR033868">
    <property type="entry name" value="Xylanase_inhibitor_I-like"/>
</dbReference>
<dbReference type="PANTHER" id="PTHR47965">
    <property type="entry name" value="ASPARTYL PROTEASE-RELATED"/>
    <property type="match status" value="1"/>
</dbReference>
<dbReference type="PANTHER" id="PTHR47965:SF28">
    <property type="entry name" value="BASIC 7S GLOBULIN"/>
    <property type="match status" value="1"/>
</dbReference>
<dbReference type="Pfam" id="PF14541">
    <property type="entry name" value="TAXi_C"/>
    <property type="match status" value="1"/>
</dbReference>
<dbReference type="Pfam" id="PF14543">
    <property type="entry name" value="TAXi_N"/>
    <property type="match status" value="1"/>
</dbReference>
<dbReference type="SUPFAM" id="SSF50630">
    <property type="entry name" value="Acid proteases"/>
    <property type="match status" value="1"/>
</dbReference>
<dbReference type="PROSITE" id="PS51767">
    <property type="entry name" value="PEPTIDASE_A1"/>
    <property type="match status" value="1"/>
</dbReference>
<name>CONG1_PRUDU</name>
<evidence type="ECO:0000250" key="1">
    <source>
        <dbReference type="UniProtKB" id="Q42369"/>
    </source>
</evidence>
<evidence type="ECO:0000250" key="2">
    <source>
        <dbReference type="UniProtKB" id="Q9FSH9"/>
    </source>
</evidence>
<evidence type="ECO:0000255" key="3"/>
<evidence type="ECO:0000255" key="4">
    <source>
        <dbReference type="PROSITE-ProRule" id="PRU01103"/>
    </source>
</evidence>
<evidence type="ECO:0000269" key="5">
    <source>
    </source>
</evidence>
<evidence type="ECO:0000303" key="6">
    <source>
    </source>
</evidence>
<evidence type="ECO:0000303" key="7">
    <source>
    </source>
</evidence>
<evidence type="ECO:0000305" key="8"/>
<evidence type="ECO:0000312" key="9">
    <source>
        <dbReference type="EMBL" id="VVA12735.1"/>
    </source>
</evidence>
<reference key="1">
    <citation type="journal article" date="2020" name="Plant J.">
        <title>Transposons played a major role in the diversification between the closely related almond and peach genomes: results from the almond genome sequence.</title>
        <authorList>
            <person name="Alioto T."/>
            <person name="Alexiou K.G."/>
            <person name="Bardil A."/>
            <person name="Barteri F."/>
            <person name="Castanera R."/>
            <person name="Cruz F."/>
            <person name="Dhingra A."/>
            <person name="Duval H."/>
            <person name="Fernandez I Marti A."/>
            <person name="Frias L."/>
            <person name="Galan B."/>
            <person name="Garcia J.L."/>
            <person name="Howad W."/>
            <person name="Gomez-Garrido J."/>
            <person name="Gut M."/>
            <person name="Julca I."/>
            <person name="Morata J."/>
            <person name="Puigdomenech P."/>
            <person name="Ribeca P."/>
            <person name="Rubio Cabetas M.J."/>
            <person name="Vlasova A."/>
            <person name="Wirthensohn M."/>
            <person name="Garcia-Mas J."/>
            <person name="Gabaldon T."/>
            <person name="Casacuberta J.M."/>
            <person name="Arus P."/>
        </authorList>
    </citation>
    <scope>NUCLEOTIDE SEQUENCE [LARGE SCALE GENOMIC DNA]</scope>
    <source>
        <strain>cv. Texas</strain>
    </source>
</reference>
<reference key="2">
    <citation type="journal article" date="2002" name="Int. Arch. Allergy Immunol.">
        <title>Identification and characterisation of the IgE-binding proteins 2S albumin and conglutin gamma in almond (Prunus dulcis) seeds.</title>
        <authorList>
            <person name="Poltronieri P."/>
            <person name="Cappello M.S."/>
            <person name="Dohmae N."/>
            <person name="Conti A."/>
            <person name="Fortunato D."/>
            <person name="Pastorello E.A."/>
            <person name="Ortolani C."/>
            <person name="Zacheo G."/>
        </authorList>
    </citation>
    <scope>PROTEIN SEQUENCE OF 25-49</scope>
    <scope>ALLERGEN</scope>
    <source>
        <strain>cv. Tuono</strain>
        <tissue>Seed</tissue>
    </source>
</reference>
<reference key="3">
    <citation type="journal article" date="2012" name="J. Agric. Food Chem.">
        <title>Almond allergens: molecular characterization, detection, and clinical relevance.</title>
        <authorList>
            <person name="Costa J."/>
            <person name="Mafra I."/>
            <person name="Carrapatoso I."/>
            <person name="Oliveira M.B.P.P."/>
        </authorList>
    </citation>
    <scope>REVIEW</scope>
</reference>
<reference key="4">
    <citation type="journal article" date="2020" name="J. Sci. Food Agric.">
        <title>Almond allergens: update and perspective on identification and characterization.</title>
        <authorList>
            <person name="Zhang Y."/>
            <person name="Jin T."/>
        </authorList>
    </citation>
    <scope>REVIEW</scope>
</reference>
<protein>
    <recommendedName>
        <fullName evidence="8">Gamma conglutin 1</fullName>
    </recommendedName>
    <alternativeName>
        <fullName evidence="7">Conglutin gamma</fullName>
    </alternativeName>
    <alternativeName>
        <fullName evidence="6">Seed allergenic protein 2</fullName>
    </alternativeName>
    <allergenName evidence="6">Pru du gamma-conglutin</allergenName>
    <component>
        <recommendedName>
            <fullName evidence="8">Gamma conglutin 1 beta subunit</fullName>
        </recommendedName>
    </component>
    <component>
        <recommendedName>
            <fullName evidence="8">Gamma conglutin 1 alpha subunit</fullName>
        </recommendedName>
    </component>
</protein>
<accession>P82952</accession>
<accession>A0A5E4EAH6</accession>
<gene>
    <name evidence="7" type="primary">Cgamma1</name>
    <name evidence="9" type="ORF">ALMOND_2B001639</name>
</gene>
<keyword id="KW-0020">Allergen</keyword>
<keyword id="KW-0903">Direct protein sequencing</keyword>
<keyword id="KW-1015">Disulfide bond</keyword>
<keyword id="KW-0389">IgE-binding protein</keyword>
<keyword id="KW-1185">Reference proteome</keyword>
<keyword id="KW-0964">Secreted</keyword>
<keyword id="KW-0732">Signal</keyword>
<comment type="function">
    <text evidence="2">Sulfur-rich seed storage protein that remains undegraded at germination.</text>
</comment>
<comment type="subunit">
    <text evidence="1 2">Two-subunit monomeric unit made of alpha and beta subunits coupled by disulfide bonds (at pH 4.5 and under non-reducing conditions) (By similarity). Monomeric alpha and beta subunits in reducing conditions (By similarity). Can also form oligomers including dimer, tetramer and cyclic hexamer (trimer of dimers) (at pH &gt; 5.5) (By similarity). Component of globulins complexes which accumulate in seeds (By similarity). Interacts with flavonoids (e.g. apigenin glucosides) present in globulins complexes (By similarity).</text>
</comment>
<comment type="subcellular location">
    <subcellularLocation>
        <location evidence="2">Secreted</location>
        <location evidence="2">Extracellular space</location>
    </subcellularLocation>
    <text evidence="2">Present in the extracellular spaces of germinating seedlings.</text>
</comment>
<comment type="allergen">
    <text evidence="5">Causes an allergic reaction in human (PubMed:12065909). Binds to IgE (PubMed:12065909).</text>
</comment>
<comment type="similarity">
    <text evidence="4">Belongs to the peptidase A1 family.</text>
</comment>
<proteinExistence type="evidence at protein level"/>
<sequence length="431" mass="46945">MASFLHNFLLFFCSLSLIILTSSATKSQTHVPIRPNKLVLKVQKDRATNLHVVQIHKRTPLVQFPFVIDLTGRFLSVNCENQYTSSTYKAPVCHSSQCARANSHTCRTCSSSKTRPGCHTNACGLLTTNPVTQQSAQGELAEDVLKIPSTQGSSPGPMVTYPHFLFACAPSNILQKGLPKNVQGVAGLGHSPISLPYQLASHFGFPPKFAVCLTSSPGKNGAVFFGEGPYFMKPGIDVSRQLTYAPFTIGQQGEYYINVQSFKINNAMLPSIPKGGFGGAMISTTTPYTTLQTPIFRALNQLFMNQLRGVPHVKPVAPFGACFDANRIPTSKMGPTVPSIDLVLDNKKNIMWRIFGANAMIQPRPGVMCLAFVDGGMRPKAPIVIGTQQLEDNLLQFDLMNSRLGFSSSLLFRRTNCANFNFGTSSTNTDP</sequence>
<organism>
    <name type="scientific">Prunus dulcis</name>
    <name type="common">Almond</name>
    <name type="synonym">Amygdalus dulcis</name>
    <dbReference type="NCBI Taxonomy" id="3755"/>
    <lineage>
        <taxon>Eukaryota</taxon>
        <taxon>Viridiplantae</taxon>
        <taxon>Streptophyta</taxon>
        <taxon>Embryophyta</taxon>
        <taxon>Tracheophyta</taxon>
        <taxon>Spermatophyta</taxon>
        <taxon>Magnoliopsida</taxon>
        <taxon>eudicotyledons</taxon>
        <taxon>Gunneridae</taxon>
        <taxon>Pentapetalae</taxon>
        <taxon>rosids</taxon>
        <taxon>fabids</taxon>
        <taxon>Rosales</taxon>
        <taxon>Rosaceae</taxon>
        <taxon>Amygdaloideae</taxon>
        <taxon>Amygdaleae</taxon>
        <taxon>Prunus</taxon>
    </lineage>
</organism>